<proteinExistence type="evidence at protein level"/>
<comment type="function">
    <text evidence="3">DNA-dependent RNA polymerase catalyzes the transcription of DNA into RNA using the four ribonucleoside triphosphates as substrates.</text>
</comment>
<comment type="catalytic activity">
    <reaction evidence="1 3">
        <text>RNA(n) + a ribonucleoside 5'-triphosphate = RNA(n+1) + diphosphate</text>
        <dbReference type="Rhea" id="RHEA:21248"/>
        <dbReference type="Rhea" id="RHEA-COMP:14527"/>
        <dbReference type="Rhea" id="RHEA-COMP:17342"/>
        <dbReference type="ChEBI" id="CHEBI:33019"/>
        <dbReference type="ChEBI" id="CHEBI:61557"/>
        <dbReference type="ChEBI" id="CHEBI:140395"/>
        <dbReference type="EC" id="2.7.7.6"/>
    </reaction>
</comment>
<comment type="subunit">
    <text evidence="1 3 4 5">RNAP is composed of a core of 2 alpha, a beta and a beta' subunit. The core is associated with a delta subunit, and at least one of epsilon or omega (PubMed:18289874, PubMed:21710567, PubMed:6802805). When a sigma factor is associated with the core the holoenzyme is formed, which can initiate transcription (PubMed:18289874).</text>
</comment>
<comment type="similarity">
    <text evidence="1">Belongs to the RNA polymerase beta chain family.</text>
</comment>
<evidence type="ECO:0000255" key="1">
    <source>
        <dbReference type="HAMAP-Rule" id="MF_01321"/>
    </source>
</evidence>
<evidence type="ECO:0000256" key="2">
    <source>
        <dbReference type="SAM" id="MobiDB-lite"/>
    </source>
</evidence>
<evidence type="ECO:0000269" key="3">
    <source>
    </source>
</evidence>
<evidence type="ECO:0000269" key="4">
    <source>
    </source>
</evidence>
<evidence type="ECO:0000269" key="5">
    <source>
    </source>
</evidence>
<evidence type="ECO:0000269" key="6">
    <source>
    </source>
</evidence>
<evidence type="ECO:0000305" key="7"/>
<evidence type="ECO:0007829" key="8">
    <source>
        <dbReference type="PDB" id="6WVJ"/>
    </source>
</evidence>
<evidence type="ECO:0007829" key="9">
    <source>
        <dbReference type="PDB" id="6WVK"/>
    </source>
</evidence>
<evidence type="ECO:0007829" key="10">
    <source>
        <dbReference type="PDB" id="8XA6"/>
    </source>
</evidence>
<evidence type="ECO:0007829" key="11">
    <source>
        <dbReference type="PDB" id="8XA7"/>
    </source>
</evidence>
<evidence type="ECO:0007829" key="12">
    <source>
        <dbReference type="PDB" id="8XA8"/>
    </source>
</evidence>
<accession>P37870</accession>
<name>RPOB_BACSU</name>
<protein>
    <recommendedName>
        <fullName evidence="1">DNA-directed RNA polymerase subunit beta</fullName>
        <shortName evidence="1">RNAP subunit beta</shortName>
        <ecNumber evidence="1 3">2.7.7.6</ecNumber>
    </recommendedName>
    <alternativeName>
        <fullName evidence="1">RNA polymerase subunit beta</fullName>
    </alternativeName>
    <alternativeName>
        <fullName evidence="1">Transcriptase subunit beta</fullName>
    </alternativeName>
</protein>
<gene>
    <name evidence="1" type="primary">rpoB</name>
    <name type="synonym">crsE</name>
    <name type="synonym">rfm</name>
    <name type="ordered locus">BSU01070</name>
</gene>
<organism>
    <name type="scientific">Bacillus subtilis (strain 168)</name>
    <dbReference type="NCBI Taxonomy" id="224308"/>
    <lineage>
        <taxon>Bacteria</taxon>
        <taxon>Bacillati</taxon>
        <taxon>Bacillota</taxon>
        <taxon>Bacilli</taxon>
        <taxon>Bacillales</taxon>
        <taxon>Bacillaceae</taxon>
        <taxon>Bacillus</taxon>
    </lineage>
</organism>
<reference key="1">
    <citation type="journal article" date="1995" name="J. Biol. Chem.">
        <title>Genetic and transcriptional organization of the region encoding the beta subunit of Bacillus subtilis RNA polymerase.</title>
        <authorList>
            <person name="Boor K.J."/>
            <person name="Duncan M.L."/>
            <person name="Price C.W."/>
        </authorList>
    </citation>
    <scope>NUCLEOTIDE SEQUENCE [GENOMIC DNA]</scope>
    <source>
        <strain>168 / Marburg / ATCC 6051 / DSM 10 / JCM 1465 / NBRC 13719 / NCIMB 3610 / NRRL NRS-744 / VKM B-501</strain>
    </source>
</reference>
<reference key="2">
    <citation type="journal article" date="1997" name="Nature">
        <title>The complete genome sequence of the Gram-positive bacterium Bacillus subtilis.</title>
        <authorList>
            <person name="Kunst F."/>
            <person name="Ogasawara N."/>
            <person name="Moszer I."/>
            <person name="Albertini A.M."/>
            <person name="Alloni G."/>
            <person name="Azevedo V."/>
            <person name="Bertero M.G."/>
            <person name="Bessieres P."/>
            <person name="Bolotin A."/>
            <person name="Borchert S."/>
            <person name="Borriss R."/>
            <person name="Boursier L."/>
            <person name="Brans A."/>
            <person name="Braun M."/>
            <person name="Brignell S.C."/>
            <person name="Bron S."/>
            <person name="Brouillet S."/>
            <person name="Bruschi C.V."/>
            <person name="Caldwell B."/>
            <person name="Capuano V."/>
            <person name="Carter N.M."/>
            <person name="Choi S.-K."/>
            <person name="Codani J.-J."/>
            <person name="Connerton I.F."/>
            <person name="Cummings N.J."/>
            <person name="Daniel R.A."/>
            <person name="Denizot F."/>
            <person name="Devine K.M."/>
            <person name="Duesterhoeft A."/>
            <person name="Ehrlich S.D."/>
            <person name="Emmerson P.T."/>
            <person name="Entian K.-D."/>
            <person name="Errington J."/>
            <person name="Fabret C."/>
            <person name="Ferrari E."/>
            <person name="Foulger D."/>
            <person name="Fritz C."/>
            <person name="Fujita M."/>
            <person name="Fujita Y."/>
            <person name="Fuma S."/>
            <person name="Galizzi A."/>
            <person name="Galleron N."/>
            <person name="Ghim S.-Y."/>
            <person name="Glaser P."/>
            <person name="Goffeau A."/>
            <person name="Golightly E.J."/>
            <person name="Grandi G."/>
            <person name="Guiseppi G."/>
            <person name="Guy B.J."/>
            <person name="Haga K."/>
            <person name="Haiech J."/>
            <person name="Harwood C.R."/>
            <person name="Henaut A."/>
            <person name="Hilbert H."/>
            <person name="Holsappel S."/>
            <person name="Hosono S."/>
            <person name="Hullo M.-F."/>
            <person name="Itaya M."/>
            <person name="Jones L.-M."/>
            <person name="Joris B."/>
            <person name="Karamata D."/>
            <person name="Kasahara Y."/>
            <person name="Klaerr-Blanchard M."/>
            <person name="Klein C."/>
            <person name="Kobayashi Y."/>
            <person name="Koetter P."/>
            <person name="Koningstein G."/>
            <person name="Krogh S."/>
            <person name="Kumano M."/>
            <person name="Kurita K."/>
            <person name="Lapidus A."/>
            <person name="Lardinois S."/>
            <person name="Lauber J."/>
            <person name="Lazarevic V."/>
            <person name="Lee S.-M."/>
            <person name="Levine A."/>
            <person name="Liu H."/>
            <person name="Masuda S."/>
            <person name="Mauel C."/>
            <person name="Medigue C."/>
            <person name="Medina N."/>
            <person name="Mellado R.P."/>
            <person name="Mizuno M."/>
            <person name="Moestl D."/>
            <person name="Nakai S."/>
            <person name="Noback M."/>
            <person name="Noone D."/>
            <person name="O'Reilly M."/>
            <person name="Ogawa K."/>
            <person name="Ogiwara A."/>
            <person name="Oudega B."/>
            <person name="Park S.-H."/>
            <person name="Parro V."/>
            <person name="Pohl T.M."/>
            <person name="Portetelle D."/>
            <person name="Porwollik S."/>
            <person name="Prescott A.M."/>
            <person name="Presecan E."/>
            <person name="Pujic P."/>
            <person name="Purnelle B."/>
            <person name="Rapoport G."/>
            <person name="Rey M."/>
            <person name="Reynolds S."/>
            <person name="Rieger M."/>
            <person name="Rivolta C."/>
            <person name="Rocha E."/>
            <person name="Roche B."/>
            <person name="Rose M."/>
            <person name="Sadaie Y."/>
            <person name="Sato T."/>
            <person name="Scanlan E."/>
            <person name="Schleich S."/>
            <person name="Schroeter R."/>
            <person name="Scoffone F."/>
            <person name="Sekiguchi J."/>
            <person name="Sekowska A."/>
            <person name="Seror S.J."/>
            <person name="Serror P."/>
            <person name="Shin B.-S."/>
            <person name="Soldo B."/>
            <person name="Sorokin A."/>
            <person name="Tacconi E."/>
            <person name="Takagi T."/>
            <person name="Takahashi H."/>
            <person name="Takemaru K."/>
            <person name="Takeuchi M."/>
            <person name="Tamakoshi A."/>
            <person name="Tanaka T."/>
            <person name="Terpstra P."/>
            <person name="Tognoni A."/>
            <person name="Tosato V."/>
            <person name="Uchiyama S."/>
            <person name="Vandenbol M."/>
            <person name="Vannier F."/>
            <person name="Vassarotti A."/>
            <person name="Viari A."/>
            <person name="Wambutt R."/>
            <person name="Wedler E."/>
            <person name="Wedler H."/>
            <person name="Weitzenegger T."/>
            <person name="Winters P."/>
            <person name="Wipat A."/>
            <person name="Yamamoto H."/>
            <person name="Yamane K."/>
            <person name="Yasumoto K."/>
            <person name="Yata K."/>
            <person name="Yoshida K."/>
            <person name="Yoshikawa H.-F."/>
            <person name="Zumstein E."/>
            <person name="Yoshikawa H."/>
            <person name="Danchin A."/>
        </authorList>
    </citation>
    <scope>NUCLEOTIDE SEQUENCE [LARGE SCALE GENOMIC DNA]</scope>
    <source>
        <strain>168</strain>
    </source>
</reference>
<reference key="3">
    <citation type="journal article" date="2009" name="Microbiology">
        <title>From a consortium sequence to a unified sequence: the Bacillus subtilis 168 reference genome a decade later.</title>
        <authorList>
            <person name="Barbe V."/>
            <person name="Cruveiller S."/>
            <person name="Kunst F."/>
            <person name="Lenoble P."/>
            <person name="Meurice G."/>
            <person name="Sekowska A."/>
            <person name="Vallenet D."/>
            <person name="Wang T."/>
            <person name="Moszer I."/>
            <person name="Medigue C."/>
            <person name="Danchin A."/>
        </authorList>
    </citation>
    <scope>SEQUENCE REVISION TO 1073-1074</scope>
</reference>
<reference key="4">
    <citation type="journal article" date="1982" name="J. Bacteriol.">
        <title>Interchangeability of delta subunits of RNA polymerase from different species of the genus Bacillus.</title>
        <authorList>
            <person name="Achberger E.C."/>
            <person name="Tahara M."/>
            <person name="Whiteley H.R."/>
        </authorList>
    </citation>
    <scope>SUBUNIT</scope>
    <source>
        <strain>168</strain>
    </source>
</reference>
<reference key="5">
    <citation type="journal article" date="1995" name="J. Biol. Chem.">
        <title>Streptolydigin resistance can be conferred by alterations to either the beta or beta' subunits of Bacillus subtilis RNA polymerase.</title>
        <authorList>
            <person name="Yang X."/>
            <person name="Price C.W."/>
        </authorList>
    </citation>
    <scope>MUTAGENESIS TO STREPTOLYDIGAN RESISTANCE</scope>
    <source>
        <strain>168 / Marburg / ATCC 6051 / DSM 10 / JCM 1465 / NBRC 13719 / NCIMB 3610 / NRRL NRS-744 / VKM B-501</strain>
    </source>
</reference>
<reference key="6">
    <citation type="journal article" date="2008" name="Protein Expr. Purif.">
        <title>Overproduction and purification of recombinant Bacillus subtilis RNA polymerase.</title>
        <authorList>
            <person name="Yang X."/>
            <person name="Lewis P.J."/>
        </authorList>
    </citation>
    <scope>FUNCTION</scope>
    <scope>SUBUNIT</scope>
    <source>
        <strain>BS200</strain>
    </source>
</reference>
<reference key="7">
    <citation type="journal article" date="2011" name="Proteomics">
        <title>The dynamic protein partnership of RNA polymerase in Bacillus subtilis.</title>
        <authorList>
            <person name="Delumeau O."/>
            <person name="Lecointe F."/>
            <person name="Muntel J."/>
            <person name="Guillot A."/>
            <person name="Guedon E."/>
            <person name="Monnet V."/>
            <person name="Hecker M."/>
            <person name="Becher D."/>
            <person name="Polard P."/>
            <person name="Noirot P."/>
        </authorList>
    </citation>
    <scope>SUBUNIT</scope>
    <source>
        <strain>168</strain>
    </source>
</reference>
<feature type="chain" id="PRO_0000047860" description="DNA-directed RNA polymerase subunit beta">
    <location>
        <begin position="1"/>
        <end position="1193"/>
    </location>
</feature>
<feature type="region of interest" description="Disordered" evidence="2">
    <location>
        <begin position="1149"/>
        <end position="1193"/>
    </location>
</feature>
<feature type="compositionally biased region" description="Acidic residues" evidence="2">
    <location>
        <begin position="1149"/>
        <end position="1162"/>
    </location>
</feature>
<feature type="compositionally biased region" description="Basic and acidic residues" evidence="2">
    <location>
        <begin position="1184"/>
        <end position="1193"/>
    </location>
</feature>
<feature type="sequence variant" description="In rfm2103; rifampicin resistant.">
    <original>H</original>
    <variation>Y</variation>
    <location>
        <position position="482"/>
    </location>
</feature>
<feature type="mutagenesis site" description="Not streptolydigan resistant." evidence="6">
    <location>
        <begin position="499"/>
        <end position="502"/>
    </location>
</feature>
<feature type="mutagenesis site" description="Streptolydigan resistant." evidence="6">
    <original>A</original>
    <variation>V</variation>
    <location>
        <position position="499"/>
    </location>
</feature>
<feature type="mutagenesis site" description="Streptolydigan resistant." evidence="6">
    <original>G</original>
    <variation>R</variation>
    <location>
        <position position="500"/>
    </location>
</feature>
<feature type="mutagenesis site" description="Not streptolydigan resistant." evidence="6">
    <original>M</original>
    <variation>S</variation>
    <location>
        <position position="501"/>
    </location>
</feature>
<feature type="mutagenesis site" description="Streptolydigan resistant." evidence="6">
    <original>E</original>
    <variation>V</variation>
    <location>
        <position position="502"/>
    </location>
</feature>
<feature type="sequence conflict" description="In Ref. 1; AAB00972." evidence="7" ref="1">
    <original>QR</original>
    <variation>HG</variation>
    <location>
        <begin position="1073"/>
        <end position="1074"/>
    </location>
</feature>
<feature type="strand" evidence="11">
    <location>
        <begin position="4"/>
        <end position="7"/>
    </location>
</feature>
<feature type="strand" evidence="11">
    <location>
        <begin position="9"/>
        <end position="11"/>
    </location>
</feature>
<feature type="strand" evidence="11">
    <location>
        <begin position="13"/>
        <end position="16"/>
    </location>
</feature>
<feature type="helix" evidence="11">
    <location>
        <begin position="31"/>
        <end position="52"/>
    </location>
</feature>
<feature type="strand" evidence="10">
    <location>
        <begin position="55"/>
        <end position="57"/>
    </location>
</feature>
<feature type="strand" evidence="11">
    <location>
        <begin position="60"/>
        <end position="68"/>
    </location>
</feature>
<feature type="helix" evidence="11">
    <location>
        <begin position="78"/>
        <end position="82"/>
    </location>
</feature>
<feature type="turn" evidence="11">
    <location>
        <begin position="83"/>
        <end position="85"/>
    </location>
</feature>
<feature type="strand" evidence="11">
    <location>
        <begin position="89"/>
        <end position="103"/>
    </location>
</feature>
<feature type="strand" evidence="11">
    <location>
        <begin position="108"/>
        <end position="117"/>
    </location>
</feature>
<feature type="strand" evidence="10">
    <location>
        <begin position="120"/>
        <end position="123"/>
    </location>
</feature>
<feature type="strand" evidence="11">
    <location>
        <begin position="125"/>
        <end position="127"/>
    </location>
</feature>
<feature type="strand" evidence="11">
    <location>
        <begin position="130"/>
        <end position="134"/>
    </location>
</feature>
<feature type="strand" evidence="11">
    <location>
        <begin position="136"/>
        <end position="140"/>
    </location>
</feature>
<feature type="strand" evidence="11">
    <location>
        <begin position="142"/>
        <end position="145"/>
    </location>
</feature>
<feature type="strand" evidence="8">
    <location>
        <begin position="152"/>
        <end position="154"/>
    </location>
</feature>
<feature type="strand" evidence="11">
    <location>
        <begin position="159"/>
        <end position="162"/>
    </location>
</feature>
<feature type="strand" evidence="11">
    <location>
        <begin position="165"/>
        <end position="167"/>
    </location>
</feature>
<feature type="strand" evidence="11">
    <location>
        <begin position="170"/>
        <end position="174"/>
    </location>
</feature>
<feature type="strand" evidence="11">
    <location>
        <begin position="180"/>
        <end position="182"/>
    </location>
</feature>
<feature type="strand" evidence="11">
    <location>
        <begin position="184"/>
        <end position="186"/>
    </location>
</feature>
<feature type="helix" evidence="11">
    <location>
        <begin position="192"/>
        <end position="196"/>
    </location>
</feature>
<feature type="strand" evidence="11">
    <location>
        <begin position="197"/>
        <end position="200"/>
    </location>
</feature>
<feature type="helix" evidence="11">
    <location>
        <begin position="204"/>
        <end position="207"/>
    </location>
</feature>
<feature type="turn" evidence="11">
    <location>
        <begin position="208"/>
        <end position="210"/>
    </location>
</feature>
<feature type="strand" evidence="11">
    <location>
        <begin position="214"/>
        <end position="217"/>
    </location>
</feature>
<feature type="helix" evidence="11">
    <location>
        <begin position="218"/>
        <end position="223"/>
    </location>
</feature>
<feature type="helix" evidence="11">
    <location>
        <begin position="229"/>
        <end position="237"/>
    </location>
</feature>
<feature type="strand" evidence="11">
    <location>
        <begin position="240"/>
        <end position="242"/>
    </location>
</feature>
<feature type="helix" evidence="11">
    <location>
        <begin position="248"/>
        <end position="257"/>
    </location>
</feature>
<feature type="turn" evidence="11">
    <location>
        <begin position="262"/>
        <end position="264"/>
    </location>
</feature>
<feature type="helix" evidence="11">
    <location>
        <begin position="269"/>
        <end position="279"/>
    </location>
</feature>
<feature type="helix" evidence="11">
    <location>
        <begin position="282"/>
        <end position="285"/>
    </location>
</feature>
<feature type="strand" evidence="12">
    <location>
        <begin position="289"/>
        <end position="292"/>
    </location>
</feature>
<feature type="strand" evidence="12">
    <location>
        <begin position="314"/>
        <end position="318"/>
    </location>
</feature>
<feature type="strand" evidence="11">
    <location>
        <begin position="322"/>
        <end position="324"/>
    </location>
</feature>
<feature type="strand" evidence="12">
    <location>
        <begin position="333"/>
        <end position="337"/>
    </location>
</feature>
<feature type="strand" evidence="11">
    <location>
        <begin position="338"/>
        <end position="340"/>
    </location>
</feature>
<feature type="strand" evidence="11">
    <location>
        <begin position="345"/>
        <end position="350"/>
    </location>
</feature>
<feature type="turn" evidence="10">
    <location>
        <begin position="353"/>
        <end position="355"/>
    </location>
</feature>
<feature type="strand" evidence="11">
    <location>
        <begin position="360"/>
        <end position="365"/>
    </location>
</feature>
<feature type="turn" evidence="10">
    <location>
        <begin position="371"/>
        <end position="373"/>
    </location>
</feature>
<feature type="helix" evidence="11">
    <location>
        <begin position="378"/>
        <end position="392"/>
    </location>
</feature>
<feature type="strand" evidence="12">
    <location>
        <begin position="401"/>
        <end position="403"/>
    </location>
</feature>
<feature type="turn" evidence="11">
    <location>
        <begin position="404"/>
        <end position="406"/>
    </location>
</feature>
<feature type="strand" evidence="11">
    <location>
        <begin position="407"/>
        <end position="410"/>
    </location>
</feature>
<feature type="helix" evidence="11">
    <location>
        <begin position="412"/>
        <end position="438"/>
    </location>
</feature>
<feature type="helix" evidence="11">
    <location>
        <begin position="445"/>
        <end position="448"/>
    </location>
</feature>
<feature type="helix" evidence="11">
    <location>
        <begin position="452"/>
        <end position="463"/>
    </location>
</feature>
<feature type="strand" evidence="11">
    <location>
        <begin position="466"/>
        <end position="470"/>
    </location>
</feature>
<feature type="helix" evidence="11">
    <location>
        <begin position="476"/>
        <end position="483"/>
    </location>
</feature>
<feature type="strand" evidence="11">
    <location>
        <begin position="485"/>
        <end position="488"/>
    </location>
</feature>
<feature type="turn" evidence="11">
    <location>
        <begin position="496"/>
        <end position="498"/>
    </location>
</feature>
<feature type="turn" evidence="11">
    <location>
        <begin position="501"/>
        <end position="504"/>
    </location>
</feature>
<feature type="helix" evidence="11">
    <location>
        <begin position="508"/>
        <end position="510"/>
    </location>
</feature>
<feature type="turn" evidence="11">
    <location>
        <begin position="511"/>
        <end position="513"/>
    </location>
</feature>
<feature type="strand" evidence="10">
    <location>
        <begin position="514"/>
        <end position="517"/>
    </location>
</feature>
<feature type="turn" evidence="10">
    <location>
        <begin position="523"/>
        <end position="527"/>
    </location>
</feature>
<feature type="strand" evidence="11">
    <location>
        <begin position="528"/>
        <end position="531"/>
    </location>
</feature>
<feature type="strand" evidence="10">
    <location>
        <begin position="539"/>
        <end position="541"/>
    </location>
</feature>
<feature type="strand" evidence="11">
    <location>
        <begin position="543"/>
        <end position="550"/>
    </location>
</feature>
<feature type="turn" evidence="11">
    <location>
        <begin position="552"/>
        <end position="554"/>
    </location>
</feature>
<feature type="strand" evidence="11">
    <location>
        <begin position="556"/>
        <end position="565"/>
    </location>
</feature>
<feature type="helix" evidence="11">
    <location>
        <begin position="566"/>
        <end position="569"/>
    </location>
</feature>
<feature type="strand" evidence="10">
    <location>
        <begin position="582"/>
        <end position="584"/>
    </location>
</feature>
<feature type="strand" evidence="11">
    <location>
        <begin position="585"/>
        <end position="587"/>
    </location>
</feature>
<feature type="strand" evidence="11">
    <location>
        <begin position="589"/>
        <end position="592"/>
    </location>
</feature>
<feature type="strand" evidence="11">
    <location>
        <begin position="603"/>
        <end position="605"/>
    </location>
</feature>
<feature type="strand" evidence="12">
    <location>
        <begin position="610"/>
        <end position="613"/>
    </location>
</feature>
<feature type="helix" evidence="11">
    <location>
        <begin position="615"/>
        <end position="617"/>
    </location>
</feature>
<feature type="helix" evidence="11">
    <location>
        <begin position="623"/>
        <end position="625"/>
    </location>
</feature>
<feature type="helix" evidence="11">
    <location>
        <begin position="629"/>
        <end position="631"/>
    </location>
</feature>
<feature type="helix" evidence="11">
    <location>
        <begin position="634"/>
        <end position="644"/>
    </location>
</feature>
<feature type="strand" evidence="11">
    <location>
        <begin position="650"/>
        <end position="652"/>
    </location>
</feature>
<feature type="strand" evidence="11">
    <location>
        <begin position="657"/>
        <end position="659"/>
    </location>
</feature>
<feature type="helix" evidence="11">
    <location>
        <begin position="662"/>
        <end position="670"/>
    </location>
</feature>
<feature type="strand" evidence="11">
    <location>
        <begin position="673"/>
        <end position="675"/>
    </location>
</feature>
<feature type="strand" evidence="11">
    <location>
        <begin position="680"/>
        <end position="685"/>
    </location>
</feature>
<feature type="strand" evidence="11">
    <location>
        <begin position="687"/>
        <end position="694"/>
    </location>
</feature>
<feature type="turn" evidence="11">
    <location>
        <begin position="698"/>
        <end position="700"/>
    </location>
</feature>
<feature type="strand" evidence="11">
    <location>
        <begin position="707"/>
        <end position="711"/>
    </location>
</feature>
<feature type="strand" evidence="10">
    <location>
        <begin position="714"/>
        <end position="717"/>
    </location>
</feature>
<feature type="strand" evidence="12">
    <location>
        <begin position="721"/>
        <end position="724"/>
    </location>
</feature>
<feature type="strand" evidence="11">
    <location>
        <begin position="741"/>
        <end position="744"/>
    </location>
</feature>
<feature type="strand" evidence="12">
    <location>
        <begin position="748"/>
        <end position="753"/>
    </location>
</feature>
<feature type="strand" evidence="11">
    <location>
        <begin position="755"/>
        <end position="763"/>
    </location>
</feature>
<feature type="helix" evidence="11">
    <location>
        <begin position="768"/>
        <end position="773"/>
    </location>
</feature>
<feature type="strand" evidence="11">
    <location>
        <begin position="775"/>
        <end position="779"/>
    </location>
</feature>
<feature type="helix" evidence="11">
    <location>
        <begin position="780"/>
        <end position="783"/>
    </location>
</feature>
<feature type="turn" evidence="11">
    <location>
        <begin position="784"/>
        <end position="787"/>
    </location>
</feature>
<feature type="strand" evidence="11">
    <location>
        <begin position="789"/>
        <end position="802"/>
    </location>
</feature>
<feature type="strand" evidence="9">
    <location>
        <begin position="803"/>
        <end position="806"/>
    </location>
</feature>
<feature type="strand" evidence="8">
    <location>
        <begin position="814"/>
        <end position="816"/>
    </location>
</feature>
<feature type="helix" evidence="11">
    <location>
        <begin position="818"/>
        <end position="820"/>
    </location>
</feature>
<feature type="strand" evidence="11">
    <location>
        <begin position="821"/>
        <end position="824"/>
    </location>
</feature>
<feature type="strand" evidence="11">
    <location>
        <begin position="828"/>
        <end position="830"/>
    </location>
</feature>
<feature type="strand" evidence="11">
    <location>
        <begin position="841"/>
        <end position="843"/>
    </location>
</feature>
<feature type="strand" evidence="11">
    <location>
        <begin position="845"/>
        <end position="849"/>
    </location>
</feature>
<feature type="strand" evidence="11">
    <location>
        <begin position="851"/>
        <end position="853"/>
    </location>
</feature>
<feature type="strand" evidence="11">
    <location>
        <begin position="855"/>
        <end position="858"/>
    </location>
</feature>
<feature type="helix" evidence="10">
    <location>
        <begin position="861"/>
        <end position="864"/>
    </location>
</feature>
<feature type="strand" evidence="11">
    <location>
        <begin position="871"/>
        <end position="873"/>
    </location>
</feature>
<feature type="strand" evidence="11">
    <location>
        <begin position="885"/>
        <end position="894"/>
    </location>
</feature>
<feature type="turn" evidence="11">
    <location>
        <begin position="895"/>
        <end position="898"/>
    </location>
</feature>
<feature type="strand" evidence="11">
    <location>
        <begin position="905"/>
        <end position="917"/>
    </location>
</feature>
<feature type="strand" evidence="11">
    <location>
        <begin position="924"/>
        <end position="926"/>
    </location>
</feature>
<feature type="strand" evidence="11">
    <location>
        <begin position="928"/>
        <end position="930"/>
    </location>
</feature>
<feature type="strand" evidence="11">
    <location>
        <begin position="933"/>
        <end position="939"/>
    </location>
</feature>
<feature type="turn" evidence="11">
    <location>
        <begin position="941"/>
        <end position="943"/>
    </location>
</feature>
<feature type="strand" evidence="11">
    <location>
        <begin position="954"/>
        <end position="957"/>
    </location>
</feature>
<feature type="helix" evidence="11">
    <location>
        <begin position="959"/>
        <end position="961"/>
    </location>
</feature>
<feature type="helix" evidence="11">
    <location>
        <begin position="963"/>
        <end position="965"/>
    </location>
</feature>
<feature type="helix" evidence="11">
    <location>
        <begin position="969"/>
        <end position="983"/>
    </location>
</feature>
<feature type="turn" evidence="11">
    <location>
        <begin position="991"/>
        <end position="993"/>
    </location>
</feature>
<feature type="helix" evidence="11">
    <location>
        <begin position="997"/>
        <end position="1006"/>
    </location>
</feature>
<feature type="strand" evidence="9">
    <location>
        <begin position="1011"/>
        <end position="1013"/>
    </location>
</feature>
<feature type="strand" evidence="11">
    <location>
        <begin position="1020"/>
        <end position="1022"/>
    </location>
</feature>
<feature type="strand" evidence="11">
    <location>
        <begin position="1032"/>
        <end position="1039"/>
    </location>
</feature>
<feature type="helix" evidence="11">
    <location>
        <begin position="1044"/>
        <end position="1046"/>
    </location>
</feature>
<feature type="strand" evidence="10">
    <location>
        <begin position="1049"/>
        <end position="1052"/>
    </location>
</feature>
<feature type="strand" evidence="11">
    <location>
        <begin position="1056"/>
        <end position="1063"/>
    </location>
</feature>
<feature type="turn" evidence="11">
    <location>
        <begin position="1067"/>
        <end position="1070"/>
    </location>
</feature>
<feature type="strand" evidence="11">
    <location>
        <begin position="1073"/>
        <end position="1075"/>
    </location>
</feature>
<feature type="helix" evidence="11">
    <location>
        <begin position="1077"/>
        <end position="1086"/>
    </location>
</feature>
<feature type="helix" evidence="11">
    <location>
        <begin position="1089"/>
        <end position="1096"/>
    </location>
</feature>
<feature type="turn" evidence="11">
    <location>
        <begin position="1097"/>
        <end position="1099"/>
    </location>
</feature>
<feature type="helix" evidence="11">
    <location>
        <begin position="1103"/>
        <end position="1115"/>
    </location>
</feature>
<feature type="helix" evidence="11">
    <location>
        <begin position="1126"/>
        <end position="1136"/>
    </location>
</feature>
<feature type="turn" evidence="11">
    <location>
        <begin position="1137"/>
        <end position="1139"/>
    </location>
</feature>
<feature type="strand" evidence="11">
    <location>
        <begin position="1143"/>
        <end position="1145"/>
    </location>
</feature>
<feature type="strand" evidence="10">
    <location>
        <begin position="1146"/>
        <end position="1148"/>
    </location>
</feature>
<sequence length="1193" mass="133686">MTGQLVQYGRHRQRRSYARISEVLELPNLIEIQTSSYQWFLDEGLREMFQDISPIEDFTGNLSLEFIDYSLGEPKYPVEESKERDVTYSAPLRVKVRLINKETGEVKDQDVFMGDFPIMTDTGTFIINGAERVIVSQLVRSPSVYFSGKVDKNGKKGFTATVIPNRGAWLEYETDAKDVVYVRIDRTRKLPVTVLLRALGFGSDQEILDLIGENEYLRNTLDKDNTENSDKALLEIYERLRPGEPPTVENAKSLLDSRFFDPKRYDLANVGRYKINKKLHIKNRLFNQRLAETLVDPETGEILAEKGQILDRRTLDKVLPYLENGIGFRKLYPNGGVVEDEVTLQSIKIFAPTDQEGEQVINVIGNAYIEEEIKNITPADIISSISYFFNLLHGVGDTDDIDHLGNRRLRSVGELLQNQFRIGLSRMERVVRERMSIQDTNTITPQQLINIRPVIASIKEFFGSSQLSQFMDQTNPLAELTHKRRLSALGPGGLTRERAGMEVRDVHYSHYGRMCPIETPEGPNIGLINSLSSYAKVNRFGFIETPYRRVDPETGKVTGRIDYLTADEEDNYVVAQANARLDDEGAFIDDSIVARFRGENTVVSRNRVDYMDVSPKQVVSAATACIPFLENDDSNRALMGANMQRQAVPLMQPEAPFVGTGMEYVSGKDSGAAVICKHPGIVERVEAKNVWVRRYEEVDGQKVKGNLDKYSLLKFVRSNQGTCYNQRPIVSVGDEVVKGEILADGPSMELGELALGRNVMVGFMTWDGYNYEDAIIMSERLVKDDVYTSIHIEEYESEARDTKLGPEEITRDIPNVGEDALRNLDDRGIIRIGAEVKDGDLLVGKVTPKGVTELTAEERLLHAIFGEKAREVRDTSLRVPHGGGGIIHDVKVFNREDGDELPPGVNQLVRVYIVQKRKISEGDKMAGRHGNKGVISKILPEEDMPYLPDGTPIDIMLNPLGVPSRMNIGQVLELHMGMAARYLGIHIASPVFDGAREEDVWETLEEAGMSRDAKTVLYDGRTGEPFDNRVSVGIMYMIKLAHMVDDKLHARSTGPYSLVTQQPLGGKAQFGGQRFGEMEVWALEAYGAAYTLQEILTVKSDDVVGRVKTYEAIVKGDNVPEPGVPESFKVLIKELQSLGMDVKILSGDEEEIEMRDLEDEEDAKQADGLALSGDEEPEETASADVERDVVTKE</sequence>
<keyword id="KW-0002">3D-structure</keyword>
<keyword id="KW-0046">Antibiotic resistance</keyword>
<keyword id="KW-0240">DNA-directed RNA polymerase</keyword>
<keyword id="KW-0548">Nucleotidyltransferase</keyword>
<keyword id="KW-1185">Reference proteome</keyword>
<keyword id="KW-0804">Transcription</keyword>
<keyword id="KW-0808">Transferase</keyword>
<dbReference type="EC" id="2.7.7.6" evidence="1 3"/>
<dbReference type="EMBL" id="L24376">
    <property type="protein sequence ID" value="AAB00972.1"/>
    <property type="molecule type" value="Genomic_DNA"/>
</dbReference>
<dbReference type="EMBL" id="AL009126">
    <property type="protein sequence ID" value="CAB11883.2"/>
    <property type="molecule type" value="Genomic_DNA"/>
</dbReference>
<dbReference type="PIR" id="F69698">
    <property type="entry name" value="F69698"/>
</dbReference>
<dbReference type="RefSeq" id="NP_387988.2">
    <property type="nucleotide sequence ID" value="NC_000964.3"/>
</dbReference>
<dbReference type="RefSeq" id="WP_009966326.1">
    <property type="nucleotide sequence ID" value="NZ_OZ025638.1"/>
</dbReference>
<dbReference type="PDB" id="2LY7">
    <property type="method" value="NMR"/>
    <property type="chains" value="A=784-923"/>
</dbReference>
<dbReference type="PDB" id="6WVJ">
    <property type="method" value="EM"/>
    <property type="resolution" value="3.36 A"/>
    <property type="chains" value="C=1-1193"/>
</dbReference>
<dbReference type="PDB" id="6WVK">
    <property type="method" value="EM"/>
    <property type="resolution" value="3.36 A"/>
    <property type="chains" value="C=1-1193"/>
</dbReference>
<dbReference type="PDB" id="6ZCA">
    <property type="method" value="EM"/>
    <property type="resolution" value="4.20 A"/>
    <property type="chains" value="X=1-1193"/>
</dbReference>
<dbReference type="PDB" id="6ZFB">
    <property type="method" value="EM"/>
    <property type="resolution" value="3.90 A"/>
    <property type="chains" value="X/x=1-1193"/>
</dbReference>
<dbReference type="PDB" id="7CKQ">
    <property type="method" value="EM"/>
    <property type="resolution" value="4.40 A"/>
    <property type="chains" value="C=1-1193"/>
</dbReference>
<dbReference type="PDB" id="7F75">
    <property type="method" value="EM"/>
    <property type="resolution" value="4.20 A"/>
    <property type="chains" value="C=1-1193"/>
</dbReference>
<dbReference type="PDB" id="8XA6">
    <property type="method" value="EM"/>
    <property type="resolution" value="3.02 A"/>
    <property type="chains" value="C=1-1193"/>
</dbReference>
<dbReference type="PDB" id="8XA7">
    <property type="method" value="EM"/>
    <property type="resolution" value="2.94 A"/>
    <property type="chains" value="C=1-1193"/>
</dbReference>
<dbReference type="PDB" id="8XA8">
    <property type="method" value="EM"/>
    <property type="resolution" value="3.19 A"/>
    <property type="chains" value="C=1-1193"/>
</dbReference>
<dbReference type="PDBsum" id="2LY7"/>
<dbReference type="PDBsum" id="6WVJ"/>
<dbReference type="PDBsum" id="6WVK"/>
<dbReference type="PDBsum" id="6ZCA"/>
<dbReference type="PDBsum" id="6ZFB"/>
<dbReference type="PDBsum" id="7CKQ"/>
<dbReference type="PDBsum" id="7F75"/>
<dbReference type="PDBsum" id="8XA6"/>
<dbReference type="PDBsum" id="8XA7"/>
<dbReference type="PDBsum" id="8XA8"/>
<dbReference type="EMDB" id="EMD-21921"/>
<dbReference type="EMDB" id="EMD-30390"/>
<dbReference type="EMDB" id="EMD-31485"/>
<dbReference type="EMDB" id="EMD-38195"/>
<dbReference type="EMDB" id="EMD-38196"/>
<dbReference type="EMDB" id="EMD-38197"/>
<dbReference type="SMR" id="P37870"/>
<dbReference type="DIP" id="DIP-49021N"/>
<dbReference type="FunCoup" id="P37870">
    <property type="interactions" value="627"/>
</dbReference>
<dbReference type="IntAct" id="P37870">
    <property type="interactions" value="12"/>
</dbReference>
<dbReference type="MINT" id="P37870"/>
<dbReference type="STRING" id="224308.BSU01070"/>
<dbReference type="jPOST" id="P37870"/>
<dbReference type="PaxDb" id="224308-BSU01070"/>
<dbReference type="EnsemblBacteria" id="CAB11883">
    <property type="protein sequence ID" value="CAB11883"/>
    <property type="gene ID" value="BSU_01070"/>
</dbReference>
<dbReference type="GeneID" id="86875495"/>
<dbReference type="GeneID" id="936335"/>
<dbReference type="KEGG" id="bsu:BSU01070"/>
<dbReference type="PATRIC" id="fig|224308.179.peg.110"/>
<dbReference type="eggNOG" id="COG0085">
    <property type="taxonomic scope" value="Bacteria"/>
</dbReference>
<dbReference type="InParanoid" id="P37870"/>
<dbReference type="OrthoDB" id="9803954at2"/>
<dbReference type="PhylomeDB" id="P37870"/>
<dbReference type="BioCyc" id="BSUB:BSU01070-MONOMER"/>
<dbReference type="EvolutionaryTrace" id="P37870"/>
<dbReference type="Proteomes" id="UP000001570">
    <property type="component" value="Chromosome"/>
</dbReference>
<dbReference type="GO" id="GO:0000428">
    <property type="term" value="C:DNA-directed RNA polymerase complex"/>
    <property type="evidence" value="ECO:0007669"/>
    <property type="project" value="UniProtKB-KW"/>
</dbReference>
<dbReference type="GO" id="GO:0003677">
    <property type="term" value="F:DNA binding"/>
    <property type="evidence" value="ECO:0007669"/>
    <property type="project" value="UniProtKB-UniRule"/>
</dbReference>
<dbReference type="GO" id="GO:0003899">
    <property type="term" value="F:DNA-directed RNA polymerase activity"/>
    <property type="evidence" value="ECO:0007669"/>
    <property type="project" value="UniProtKB-UniRule"/>
</dbReference>
<dbReference type="GO" id="GO:0032549">
    <property type="term" value="F:ribonucleoside binding"/>
    <property type="evidence" value="ECO:0007669"/>
    <property type="project" value="InterPro"/>
</dbReference>
<dbReference type="GO" id="GO:0006351">
    <property type="term" value="P:DNA-templated transcription"/>
    <property type="evidence" value="ECO:0007669"/>
    <property type="project" value="UniProtKB-UniRule"/>
</dbReference>
<dbReference type="GO" id="GO:0046677">
    <property type="term" value="P:response to antibiotic"/>
    <property type="evidence" value="ECO:0007669"/>
    <property type="project" value="UniProtKB-KW"/>
</dbReference>
<dbReference type="CDD" id="cd00653">
    <property type="entry name" value="RNA_pol_B_RPB2"/>
    <property type="match status" value="1"/>
</dbReference>
<dbReference type="FunFam" id="3.90.1800.10:FF:000001">
    <property type="entry name" value="DNA-directed RNA polymerase subunit beta"/>
    <property type="match status" value="1"/>
</dbReference>
<dbReference type="Gene3D" id="2.40.50.100">
    <property type="match status" value="1"/>
</dbReference>
<dbReference type="Gene3D" id="2.40.50.150">
    <property type="match status" value="1"/>
</dbReference>
<dbReference type="Gene3D" id="3.90.1100.10">
    <property type="match status" value="3"/>
</dbReference>
<dbReference type="Gene3D" id="2.40.270.10">
    <property type="entry name" value="DNA-directed RNA polymerase, subunit 2, domain 6"/>
    <property type="match status" value="1"/>
</dbReference>
<dbReference type="Gene3D" id="3.90.1800.10">
    <property type="entry name" value="RNA polymerase alpha subunit dimerisation domain"/>
    <property type="match status" value="1"/>
</dbReference>
<dbReference type="Gene3D" id="3.90.1110.10">
    <property type="entry name" value="RNA polymerase Rpb2, domain 2"/>
    <property type="match status" value="1"/>
</dbReference>
<dbReference type="HAMAP" id="MF_01321">
    <property type="entry name" value="RNApol_bact_RpoB"/>
    <property type="match status" value="1"/>
</dbReference>
<dbReference type="InterPro" id="IPR019462">
    <property type="entry name" value="DNA-dir_RNA_pol_bsu_external_1"/>
</dbReference>
<dbReference type="InterPro" id="IPR015712">
    <property type="entry name" value="DNA-dir_RNA_pol_su2"/>
</dbReference>
<dbReference type="InterPro" id="IPR007120">
    <property type="entry name" value="DNA-dir_RNAP_su2_dom"/>
</dbReference>
<dbReference type="InterPro" id="IPR037033">
    <property type="entry name" value="DNA-dir_RNAP_su2_hyb_sf"/>
</dbReference>
<dbReference type="InterPro" id="IPR010243">
    <property type="entry name" value="RNA_pol_bsu_bac"/>
</dbReference>
<dbReference type="InterPro" id="IPR007121">
    <property type="entry name" value="RNA_pol_bsu_CS"/>
</dbReference>
<dbReference type="InterPro" id="IPR007644">
    <property type="entry name" value="RNA_pol_bsu_protrusion"/>
</dbReference>
<dbReference type="InterPro" id="IPR007642">
    <property type="entry name" value="RNA_pol_Rpb2_2"/>
</dbReference>
<dbReference type="InterPro" id="IPR037034">
    <property type="entry name" value="RNA_pol_Rpb2_2_sf"/>
</dbReference>
<dbReference type="InterPro" id="IPR007645">
    <property type="entry name" value="RNA_pol_Rpb2_3"/>
</dbReference>
<dbReference type="InterPro" id="IPR007641">
    <property type="entry name" value="RNA_pol_Rpb2_7"/>
</dbReference>
<dbReference type="InterPro" id="IPR014724">
    <property type="entry name" value="RNA_pol_RPB2_OB-fold"/>
</dbReference>
<dbReference type="NCBIfam" id="NF001616">
    <property type="entry name" value="PRK00405.1"/>
    <property type="match status" value="1"/>
</dbReference>
<dbReference type="NCBIfam" id="TIGR02013">
    <property type="entry name" value="rpoB"/>
    <property type="match status" value="1"/>
</dbReference>
<dbReference type="PANTHER" id="PTHR20856">
    <property type="entry name" value="DNA-DIRECTED RNA POLYMERASE I SUBUNIT 2"/>
    <property type="match status" value="1"/>
</dbReference>
<dbReference type="Pfam" id="PF04563">
    <property type="entry name" value="RNA_pol_Rpb2_1"/>
    <property type="match status" value="1"/>
</dbReference>
<dbReference type="Pfam" id="PF04561">
    <property type="entry name" value="RNA_pol_Rpb2_2"/>
    <property type="match status" value="2"/>
</dbReference>
<dbReference type="Pfam" id="PF04565">
    <property type="entry name" value="RNA_pol_Rpb2_3"/>
    <property type="match status" value="1"/>
</dbReference>
<dbReference type="Pfam" id="PF10385">
    <property type="entry name" value="RNA_pol_Rpb2_45"/>
    <property type="match status" value="1"/>
</dbReference>
<dbReference type="Pfam" id="PF00562">
    <property type="entry name" value="RNA_pol_Rpb2_6"/>
    <property type="match status" value="1"/>
</dbReference>
<dbReference type="Pfam" id="PF04560">
    <property type="entry name" value="RNA_pol_Rpb2_7"/>
    <property type="match status" value="1"/>
</dbReference>
<dbReference type="SUPFAM" id="SSF64484">
    <property type="entry name" value="beta and beta-prime subunits of DNA dependent RNA-polymerase"/>
    <property type="match status" value="1"/>
</dbReference>
<dbReference type="PROSITE" id="PS01166">
    <property type="entry name" value="RNA_POL_BETA"/>
    <property type="match status" value="1"/>
</dbReference>